<evidence type="ECO:0000255" key="1">
    <source>
        <dbReference type="HAMAP-Rule" id="MF_01911"/>
    </source>
</evidence>
<feature type="chain" id="PRO_1000188791" description="HTH-type transcriptional regulator Hpr">
    <location>
        <begin position="1"/>
        <end position="185"/>
    </location>
</feature>
<feature type="domain" description="HTH marR-type" evidence="1">
    <location>
        <begin position="13"/>
        <end position="157"/>
    </location>
</feature>
<feature type="DNA-binding region" description="H-T-H motif" evidence="1">
    <location>
        <begin position="63"/>
        <end position="86"/>
    </location>
</feature>
<dbReference type="EMBL" id="CP001283">
    <property type="protein sequence ID" value="ACK87997.1"/>
    <property type="molecule type" value="Genomic_DNA"/>
</dbReference>
<dbReference type="RefSeq" id="WP_000834918.1">
    <property type="nucleotide sequence ID" value="NC_011773.1"/>
</dbReference>
<dbReference type="SMR" id="B7JCX5"/>
<dbReference type="KEGG" id="bcu:BCAH820_1122"/>
<dbReference type="HOGENOM" id="CLU_115790_0_0_9"/>
<dbReference type="Proteomes" id="UP000001363">
    <property type="component" value="Chromosome"/>
</dbReference>
<dbReference type="GO" id="GO:0003677">
    <property type="term" value="F:DNA binding"/>
    <property type="evidence" value="ECO:0007669"/>
    <property type="project" value="UniProtKB-UniRule"/>
</dbReference>
<dbReference type="GO" id="GO:0003700">
    <property type="term" value="F:DNA-binding transcription factor activity"/>
    <property type="evidence" value="ECO:0007669"/>
    <property type="project" value="UniProtKB-UniRule"/>
</dbReference>
<dbReference type="GO" id="GO:0045892">
    <property type="term" value="P:negative regulation of DNA-templated transcription"/>
    <property type="evidence" value="ECO:0007669"/>
    <property type="project" value="UniProtKB-UniRule"/>
</dbReference>
<dbReference type="GO" id="GO:0006950">
    <property type="term" value="P:response to stress"/>
    <property type="evidence" value="ECO:0007669"/>
    <property type="project" value="TreeGrafter"/>
</dbReference>
<dbReference type="GO" id="GO:0030435">
    <property type="term" value="P:sporulation resulting in formation of a cellular spore"/>
    <property type="evidence" value="ECO:0007669"/>
    <property type="project" value="UniProtKB-UniRule"/>
</dbReference>
<dbReference type="FunFam" id="1.10.10.10:FF:000194">
    <property type="entry name" value="HTH-type transcriptional regulator Hpr"/>
    <property type="match status" value="1"/>
</dbReference>
<dbReference type="Gene3D" id="1.10.10.10">
    <property type="entry name" value="Winged helix-like DNA-binding domain superfamily/Winged helix DNA-binding domain"/>
    <property type="match status" value="1"/>
</dbReference>
<dbReference type="HAMAP" id="MF_01911">
    <property type="entry name" value="HTH_type_Hpr"/>
    <property type="match status" value="1"/>
</dbReference>
<dbReference type="InterPro" id="IPR000835">
    <property type="entry name" value="HTH_MarR-typ"/>
</dbReference>
<dbReference type="InterPro" id="IPR023488">
    <property type="entry name" value="HTH_tscrpt_reg_Hpr"/>
</dbReference>
<dbReference type="InterPro" id="IPR039422">
    <property type="entry name" value="MarR/SlyA-like"/>
</dbReference>
<dbReference type="InterPro" id="IPR023187">
    <property type="entry name" value="Tscrpt_reg_MarR-type_CS"/>
</dbReference>
<dbReference type="InterPro" id="IPR036388">
    <property type="entry name" value="WH-like_DNA-bd_sf"/>
</dbReference>
<dbReference type="InterPro" id="IPR036390">
    <property type="entry name" value="WH_DNA-bd_sf"/>
</dbReference>
<dbReference type="NCBIfam" id="NF010349">
    <property type="entry name" value="PRK13777.1"/>
    <property type="match status" value="1"/>
</dbReference>
<dbReference type="PANTHER" id="PTHR33164:SF58">
    <property type="entry name" value="DNA-BINDING TRANSCRIPTIONAL REPRESSOR SCOC"/>
    <property type="match status" value="1"/>
</dbReference>
<dbReference type="PANTHER" id="PTHR33164">
    <property type="entry name" value="TRANSCRIPTIONAL REGULATOR, MARR FAMILY"/>
    <property type="match status" value="1"/>
</dbReference>
<dbReference type="Pfam" id="PF01047">
    <property type="entry name" value="MarR"/>
    <property type="match status" value="1"/>
</dbReference>
<dbReference type="SMART" id="SM00347">
    <property type="entry name" value="HTH_MARR"/>
    <property type="match status" value="1"/>
</dbReference>
<dbReference type="SUPFAM" id="SSF46785">
    <property type="entry name" value="Winged helix' DNA-binding domain"/>
    <property type="match status" value="1"/>
</dbReference>
<dbReference type="PROSITE" id="PS01117">
    <property type="entry name" value="HTH_MARR_1"/>
    <property type="match status" value="1"/>
</dbReference>
<dbReference type="PROSITE" id="PS50995">
    <property type="entry name" value="HTH_MARR_2"/>
    <property type="match status" value="1"/>
</dbReference>
<name>HPR_BACC0</name>
<proteinExistence type="inferred from homology"/>
<reference key="1">
    <citation type="submission" date="2008-10" db="EMBL/GenBank/DDBJ databases">
        <title>Genome sequence of Bacillus cereus AH820.</title>
        <authorList>
            <person name="Dodson R.J."/>
            <person name="Durkin A.S."/>
            <person name="Rosovitz M.J."/>
            <person name="Rasko D.A."/>
            <person name="Hoffmaster A."/>
            <person name="Ravel J."/>
            <person name="Sutton G."/>
        </authorList>
    </citation>
    <scope>NUCLEOTIDE SEQUENCE [LARGE SCALE GENOMIC DNA]</scope>
    <source>
        <strain>AH820</strain>
    </source>
</reference>
<comment type="function">
    <text evidence="1">Negative regulator of protease production and sporulation.</text>
</comment>
<comment type="subunit">
    <text evidence="1">Homodimer.</text>
</comment>
<sequence length="185" mass="21733">MKSGEKDYSVKEAMIFSQRIAQLSKALWKCVEKDWQMWIKPYDLNINEHHILTIAYHLKGASISEIAKFGVMHVSTAFNFSKKLEERGYLVFSKKEDDKRNTYIEITDKGEELLLRLMEEYDPENNSVFNGALALRNFYGKFPENIELIAILRNIYGQDFIDIFEKSLEDIEENFTESDQKLVKK</sequence>
<gene>
    <name evidence="1" type="primary">hpr</name>
    <name type="ordered locus">BCAH820_1122</name>
</gene>
<keyword id="KW-0238">DNA-binding</keyword>
<keyword id="KW-0678">Repressor</keyword>
<keyword id="KW-0749">Sporulation</keyword>
<keyword id="KW-0804">Transcription</keyword>
<keyword id="KW-0805">Transcription regulation</keyword>
<accession>B7JCX5</accession>
<organism>
    <name type="scientific">Bacillus cereus (strain AH820)</name>
    <dbReference type="NCBI Taxonomy" id="405535"/>
    <lineage>
        <taxon>Bacteria</taxon>
        <taxon>Bacillati</taxon>
        <taxon>Bacillota</taxon>
        <taxon>Bacilli</taxon>
        <taxon>Bacillales</taxon>
        <taxon>Bacillaceae</taxon>
        <taxon>Bacillus</taxon>
        <taxon>Bacillus cereus group</taxon>
    </lineage>
</organism>
<protein>
    <recommendedName>
        <fullName evidence="1">HTH-type transcriptional regulator Hpr</fullName>
    </recommendedName>
    <alternativeName>
        <fullName evidence="1">Protease production regulatory protein Hpr</fullName>
    </alternativeName>
</protein>